<dbReference type="EC" id="7.3.2.5" evidence="1"/>
<dbReference type="EMBL" id="CP000282">
    <property type="protein sequence ID" value="ABD82104.1"/>
    <property type="molecule type" value="Genomic_DNA"/>
</dbReference>
<dbReference type="RefSeq" id="WP_011469320.1">
    <property type="nucleotide sequence ID" value="NC_007912.1"/>
</dbReference>
<dbReference type="SMR" id="Q21GS5"/>
<dbReference type="STRING" id="203122.Sde_2847"/>
<dbReference type="GeneID" id="98614497"/>
<dbReference type="KEGG" id="sde:Sde_2847"/>
<dbReference type="eggNOG" id="COG4148">
    <property type="taxonomic scope" value="Bacteria"/>
</dbReference>
<dbReference type="HOGENOM" id="CLU_000604_1_1_6"/>
<dbReference type="OrthoDB" id="9802264at2"/>
<dbReference type="Proteomes" id="UP000001947">
    <property type="component" value="Chromosome"/>
</dbReference>
<dbReference type="GO" id="GO:0005886">
    <property type="term" value="C:plasma membrane"/>
    <property type="evidence" value="ECO:0007669"/>
    <property type="project" value="UniProtKB-SubCell"/>
</dbReference>
<dbReference type="GO" id="GO:0015412">
    <property type="term" value="F:ABC-type molybdate transporter activity"/>
    <property type="evidence" value="ECO:0007669"/>
    <property type="project" value="UniProtKB-EC"/>
</dbReference>
<dbReference type="GO" id="GO:0005524">
    <property type="term" value="F:ATP binding"/>
    <property type="evidence" value="ECO:0007669"/>
    <property type="project" value="UniProtKB-KW"/>
</dbReference>
<dbReference type="GO" id="GO:0016887">
    <property type="term" value="F:ATP hydrolysis activity"/>
    <property type="evidence" value="ECO:0007669"/>
    <property type="project" value="InterPro"/>
</dbReference>
<dbReference type="Gene3D" id="2.40.50.100">
    <property type="match status" value="1"/>
</dbReference>
<dbReference type="Gene3D" id="3.40.50.300">
    <property type="entry name" value="P-loop containing nucleotide triphosphate hydrolases"/>
    <property type="match status" value="1"/>
</dbReference>
<dbReference type="InterPro" id="IPR003593">
    <property type="entry name" value="AAA+_ATPase"/>
</dbReference>
<dbReference type="InterPro" id="IPR003439">
    <property type="entry name" value="ABC_transporter-like_ATP-bd"/>
</dbReference>
<dbReference type="InterPro" id="IPR017871">
    <property type="entry name" value="ABC_transporter-like_CS"/>
</dbReference>
<dbReference type="InterPro" id="IPR008995">
    <property type="entry name" value="Mo/tungstate-bd_C_term_dom"/>
</dbReference>
<dbReference type="InterPro" id="IPR011868">
    <property type="entry name" value="ModC_ABC_ATP-bd"/>
</dbReference>
<dbReference type="InterPro" id="IPR050334">
    <property type="entry name" value="Molybdenum_import_ModC"/>
</dbReference>
<dbReference type="InterPro" id="IPR004606">
    <property type="entry name" value="Mop_domain"/>
</dbReference>
<dbReference type="InterPro" id="IPR027417">
    <property type="entry name" value="P-loop_NTPase"/>
</dbReference>
<dbReference type="InterPro" id="IPR005116">
    <property type="entry name" value="Transp-assoc_OB_typ1"/>
</dbReference>
<dbReference type="NCBIfam" id="TIGR02142">
    <property type="entry name" value="modC_ABC"/>
    <property type="match status" value="1"/>
</dbReference>
<dbReference type="PANTHER" id="PTHR43514">
    <property type="entry name" value="ABC TRANSPORTER I FAMILY MEMBER 10"/>
    <property type="match status" value="1"/>
</dbReference>
<dbReference type="PANTHER" id="PTHR43514:SF10">
    <property type="entry name" value="MOLYBDENUM IMPORT ATP-BINDING PROTEIN MODC 2"/>
    <property type="match status" value="1"/>
</dbReference>
<dbReference type="Pfam" id="PF00005">
    <property type="entry name" value="ABC_tran"/>
    <property type="match status" value="1"/>
</dbReference>
<dbReference type="Pfam" id="PF03459">
    <property type="entry name" value="TOBE"/>
    <property type="match status" value="1"/>
</dbReference>
<dbReference type="SMART" id="SM00382">
    <property type="entry name" value="AAA"/>
    <property type="match status" value="1"/>
</dbReference>
<dbReference type="SUPFAM" id="SSF50331">
    <property type="entry name" value="MOP-like"/>
    <property type="match status" value="1"/>
</dbReference>
<dbReference type="SUPFAM" id="SSF52540">
    <property type="entry name" value="P-loop containing nucleoside triphosphate hydrolases"/>
    <property type="match status" value="1"/>
</dbReference>
<dbReference type="PROSITE" id="PS00211">
    <property type="entry name" value="ABC_TRANSPORTER_1"/>
    <property type="match status" value="1"/>
</dbReference>
<dbReference type="PROSITE" id="PS50893">
    <property type="entry name" value="ABC_TRANSPORTER_2"/>
    <property type="match status" value="1"/>
</dbReference>
<dbReference type="PROSITE" id="PS51241">
    <property type="entry name" value="MODC"/>
    <property type="match status" value="1"/>
</dbReference>
<dbReference type="PROSITE" id="PS51866">
    <property type="entry name" value="MOP"/>
    <property type="match status" value="1"/>
</dbReference>
<gene>
    <name evidence="1" type="primary">modC</name>
    <name type="ordered locus">Sde_2847</name>
</gene>
<name>MODC_SACD2</name>
<protein>
    <recommendedName>
        <fullName evidence="1">Molybdenum import ATP-binding protein ModC</fullName>
        <ecNumber evidence="1">7.3.2.5</ecNumber>
    </recommendedName>
</protein>
<accession>Q21GS5</accession>
<keyword id="KW-0067">ATP-binding</keyword>
<keyword id="KW-0997">Cell inner membrane</keyword>
<keyword id="KW-1003">Cell membrane</keyword>
<keyword id="KW-0472">Membrane</keyword>
<keyword id="KW-0500">Molybdenum</keyword>
<keyword id="KW-0547">Nucleotide-binding</keyword>
<keyword id="KW-1185">Reference proteome</keyword>
<keyword id="KW-1278">Translocase</keyword>
<keyword id="KW-0813">Transport</keyword>
<organism>
    <name type="scientific">Saccharophagus degradans (strain 2-40 / ATCC 43961 / DSM 17024)</name>
    <dbReference type="NCBI Taxonomy" id="203122"/>
    <lineage>
        <taxon>Bacteria</taxon>
        <taxon>Pseudomonadati</taxon>
        <taxon>Pseudomonadota</taxon>
        <taxon>Gammaproteobacteria</taxon>
        <taxon>Cellvibrionales</taxon>
        <taxon>Cellvibrionaceae</taxon>
        <taxon>Saccharophagus</taxon>
    </lineage>
</organism>
<comment type="function">
    <text evidence="1">Part of the ABC transporter complex ModABC involved in molybdenum import. Responsible for energy coupling to the transport system.</text>
</comment>
<comment type="catalytic activity">
    <reaction evidence="1">
        <text>molybdate(out) + ATP + H2O = molybdate(in) + ADP + phosphate + H(+)</text>
        <dbReference type="Rhea" id="RHEA:22020"/>
        <dbReference type="ChEBI" id="CHEBI:15377"/>
        <dbReference type="ChEBI" id="CHEBI:15378"/>
        <dbReference type="ChEBI" id="CHEBI:30616"/>
        <dbReference type="ChEBI" id="CHEBI:36264"/>
        <dbReference type="ChEBI" id="CHEBI:43474"/>
        <dbReference type="ChEBI" id="CHEBI:456216"/>
        <dbReference type="EC" id="7.3.2.5"/>
    </reaction>
</comment>
<comment type="subunit">
    <text evidence="1">The complex is composed of two ATP-binding proteins (ModC), two transmembrane proteins (ModB) and a solute-binding protein (ModA).</text>
</comment>
<comment type="subcellular location">
    <subcellularLocation>
        <location evidence="1">Cell inner membrane</location>
        <topology evidence="1">Peripheral membrane protein</topology>
    </subcellularLocation>
</comment>
<comment type="similarity">
    <text evidence="1">Belongs to the ABC transporter superfamily. Molybdate importer (TC 3.A.1.8) family.</text>
</comment>
<sequence>MTASGLYLNLSIGSADAPILQVDTTIATRGITAIFGPSGSGKTTLLRCIAGLTRATSGNILFNGAVWQDQTQFLAPHKRPIGYVFQDANLFSHLTALGNLQFAIKRANNASANELLDKVVALLGLQSLLNRYPNQLSGGEKQRVAIARALLICPQLLLMDEPLASLDEQRKQEILPYLEALHEEFSTPILYVSHAMNEVARLADNMLVLNNGTVVAHGNLNQVLTDTQSPTAQGEDTCVVLNATVESKDTKWQLICARISNAQLWIKAPDHATAINQTLRVRILARDVSLSLSEHSDSTILNKLAATVISISDDTDSAMALVKLAVGSDTLLARITRKSAHHLALQPNMQLWAQVKSVAIVG</sequence>
<proteinExistence type="inferred from homology"/>
<evidence type="ECO:0000255" key="1">
    <source>
        <dbReference type="HAMAP-Rule" id="MF_01705"/>
    </source>
</evidence>
<evidence type="ECO:0000255" key="2">
    <source>
        <dbReference type="PROSITE-ProRule" id="PRU01213"/>
    </source>
</evidence>
<reference key="1">
    <citation type="journal article" date="2008" name="PLoS Genet.">
        <title>Complete genome sequence of the complex carbohydrate-degrading marine bacterium, Saccharophagus degradans strain 2-40 T.</title>
        <authorList>
            <person name="Weiner R.M."/>
            <person name="Taylor L.E. II"/>
            <person name="Henrissat B."/>
            <person name="Hauser L."/>
            <person name="Land M."/>
            <person name="Coutinho P.M."/>
            <person name="Rancurel C."/>
            <person name="Saunders E.H."/>
            <person name="Longmire A.G."/>
            <person name="Zhang H."/>
            <person name="Bayer E.A."/>
            <person name="Gilbert H.J."/>
            <person name="Larimer F."/>
            <person name="Zhulin I.B."/>
            <person name="Ekborg N.A."/>
            <person name="Lamed R."/>
            <person name="Richardson P.M."/>
            <person name="Borovok I."/>
            <person name="Hutcheson S."/>
        </authorList>
    </citation>
    <scope>NUCLEOTIDE SEQUENCE [LARGE SCALE GENOMIC DNA]</scope>
    <source>
        <strain>2-40 / ATCC 43961 / DSM 17024</strain>
    </source>
</reference>
<feature type="chain" id="PRO_0000271688" description="Molybdenum import ATP-binding protein ModC">
    <location>
        <begin position="1"/>
        <end position="362"/>
    </location>
</feature>
<feature type="domain" description="ABC transporter" evidence="1">
    <location>
        <begin position="1"/>
        <end position="236"/>
    </location>
</feature>
<feature type="domain" description="Mop" evidence="2">
    <location>
        <begin position="297"/>
        <end position="362"/>
    </location>
</feature>
<feature type="binding site" evidence="1">
    <location>
        <begin position="36"/>
        <end position="43"/>
    </location>
    <ligand>
        <name>ATP</name>
        <dbReference type="ChEBI" id="CHEBI:30616"/>
    </ligand>
</feature>